<accession>Q29S14</accession>
<protein>
    <recommendedName>
        <fullName>Golgi apparatus membrane protein TVP23 homolog B</fullName>
    </recommendedName>
</protein>
<reference key="1">
    <citation type="submission" date="2006-02" db="EMBL/GenBank/DDBJ databases">
        <authorList>
            <consortium name="NIH - Mammalian Gene Collection (MGC) project"/>
        </authorList>
    </citation>
    <scope>NUCLEOTIDE SEQUENCE [LARGE SCALE MRNA]</scope>
    <source>
        <strain>Hereford</strain>
        <tissue>Uterus</tissue>
    </source>
</reference>
<dbReference type="EMBL" id="BC113231">
    <property type="protein sequence ID" value="AAI13232.1"/>
    <property type="molecule type" value="mRNA"/>
</dbReference>
<dbReference type="RefSeq" id="NP_001039617.1">
    <property type="nucleotide sequence ID" value="NM_001046152.2"/>
</dbReference>
<dbReference type="FunCoup" id="Q29S14">
    <property type="interactions" value="2719"/>
</dbReference>
<dbReference type="STRING" id="9913.ENSBTAP00000061464"/>
<dbReference type="PaxDb" id="9913-ENSBTAP00000034933"/>
<dbReference type="Ensembl" id="ENSBTAT00000120542.1">
    <property type="protein sequence ID" value="ENSBTAP00000094179.1"/>
    <property type="gene ID" value="ENSBTAG00000060680.1"/>
</dbReference>
<dbReference type="GeneID" id="513550"/>
<dbReference type="KEGG" id="bta:513550"/>
<dbReference type="CTD" id="201158"/>
<dbReference type="eggNOG" id="KOG3195">
    <property type="taxonomic scope" value="Eukaryota"/>
</dbReference>
<dbReference type="GeneTree" id="ENSGT00390000004428"/>
<dbReference type="HOGENOM" id="CLU_074845_3_0_1"/>
<dbReference type="InParanoid" id="Q29S14"/>
<dbReference type="OrthoDB" id="2151161at2759"/>
<dbReference type="TreeFam" id="TF312906"/>
<dbReference type="Proteomes" id="UP000009136">
    <property type="component" value="Chromosome 19"/>
</dbReference>
<dbReference type="GO" id="GO:0000139">
    <property type="term" value="C:Golgi membrane"/>
    <property type="evidence" value="ECO:0000318"/>
    <property type="project" value="GO_Central"/>
</dbReference>
<dbReference type="GO" id="GO:0009306">
    <property type="term" value="P:protein secretion"/>
    <property type="evidence" value="ECO:0000318"/>
    <property type="project" value="GO_Central"/>
</dbReference>
<dbReference type="GO" id="GO:0016192">
    <property type="term" value="P:vesicle-mediated transport"/>
    <property type="evidence" value="ECO:0000318"/>
    <property type="project" value="GO_Central"/>
</dbReference>
<dbReference type="InterPro" id="IPR008564">
    <property type="entry name" value="TVP23-like"/>
</dbReference>
<dbReference type="PANTHER" id="PTHR13019">
    <property type="entry name" value="GOLGI APPARATUS MEMBRANE PROTEIN TVP23"/>
    <property type="match status" value="1"/>
</dbReference>
<dbReference type="PANTHER" id="PTHR13019:SF9">
    <property type="entry name" value="GOLGI APPARATUS MEMBRANE PROTEIN TVP23 HOMOLOG B"/>
    <property type="match status" value="1"/>
</dbReference>
<dbReference type="Pfam" id="PF05832">
    <property type="entry name" value="DUF846"/>
    <property type="match status" value="1"/>
</dbReference>
<comment type="subcellular location">
    <subcellularLocation>
        <location evidence="4">Membrane</location>
        <topology evidence="4">Multi-pass membrane protein</topology>
    </subcellularLocation>
</comment>
<comment type="similarity">
    <text evidence="4">Belongs to the TVP23 family.</text>
</comment>
<proteinExistence type="evidence at transcript level"/>
<feature type="chain" id="PRO_0000247441" description="Golgi apparatus membrane protein TVP23 homolog B">
    <location>
        <begin position="1"/>
        <end position="208"/>
    </location>
</feature>
<feature type="transmembrane region" description="Helical" evidence="2">
    <location>
        <begin position="34"/>
        <end position="53"/>
    </location>
</feature>
<feature type="transmembrane region" description="Helical" evidence="2">
    <location>
        <begin position="54"/>
        <end position="72"/>
    </location>
</feature>
<feature type="transmembrane region" description="Helical" evidence="2">
    <location>
        <begin position="126"/>
        <end position="146"/>
    </location>
</feature>
<feature type="transmembrane region" description="Helical" evidence="2">
    <location>
        <begin position="152"/>
        <end position="172"/>
    </location>
</feature>
<feature type="region of interest" description="Disordered" evidence="3">
    <location>
        <begin position="1"/>
        <end position="27"/>
    </location>
</feature>
<feature type="compositionally biased region" description="Acidic residues" evidence="3">
    <location>
        <begin position="1"/>
        <end position="21"/>
    </location>
</feature>
<feature type="modified residue" description="N-acetylmethionine" evidence="1">
    <location>
        <position position="1"/>
    </location>
</feature>
<evidence type="ECO:0000250" key="1">
    <source>
        <dbReference type="UniProtKB" id="Q9NYZ1"/>
    </source>
</evidence>
<evidence type="ECO:0000255" key="2"/>
<evidence type="ECO:0000256" key="3">
    <source>
        <dbReference type="SAM" id="MobiDB-lite"/>
    </source>
</evidence>
<evidence type="ECO:0000305" key="4"/>
<organism>
    <name type="scientific">Bos taurus</name>
    <name type="common">Bovine</name>
    <dbReference type="NCBI Taxonomy" id="9913"/>
    <lineage>
        <taxon>Eukaryota</taxon>
        <taxon>Metazoa</taxon>
        <taxon>Chordata</taxon>
        <taxon>Craniata</taxon>
        <taxon>Vertebrata</taxon>
        <taxon>Euteleostomi</taxon>
        <taxon>Mammalia</taxon>
        <taxon>Eutheria</taxon>
        <taxon>Laurasiatheria</taxon>
        <taxon>Artiodactyla</taxon>
        <taxon>Ruminantia</taxon>
        <taxon>Pecora</taxon>
        <taxon>Bovidae</taxon>
        <taxon>Bovinae</taxon>
        <taxon>Bos</taxon>
    </lineage>
</organism>
<sequence>MLQQDSNDDTEDVSLFDAEEETTNRPKKSRIRHPVASFFHLFFRVSAIIVYLLCELFSSSFIACMVTIILLLSCDFWAVKNVTGRLMVGLRWWNHIDEDGKSHWVFESRKASPQEGKTVSEAESRIFWLGLVACPVLWVVFAFSALFSFRVKWLAVVIMGVVLQGANLYGYIRCKVGSRKNLTSMATTYLGRQFLRQTTGDTQTSSGE</sequence>
<keyword id="KW-0007">Acetylation</keyword>
<keyword id="KW-0472">Membrane</keyword>
<keyword id="KW-1185">Reference proteome</keyword>
<keyword id="KW-0812">Transmembrane</keyword>
<keyword id="KW-1133">Transmembrane helix</keyword>
<name>TV23B_BOVIN</name>
<gene>
    <name type="primary">TVP23B</name>
    <name type="synonym">FAM18B</name>
    <name type="synonym">FAM18B1</name>
</gene>